<feature type="chain" id="PRO_0000362182" description="Protein PsbN">
    <location>
        <begin position="1"/>
        <end position="43"/>
    </location>
</feature>
<feature type="transmembrane region" description="Helical" evidence="1">
    <location>
        <begin position="5"/>
        <end position="27"/>
    </location>
</feature>
<protein>
    <recommendedName>
        <fullName evidence="1">Protein PsbN</fullName>
    </recommendedName>
</protein>
<accession>A6MMF0</accession>
<sequence>METATLVAISISGSLVSFTGYALYTAFGQPSQQLRDPFEEHGD</sequence>
<proteinExistence type="inferred from homology"/>
<geneLocation type="chloroplast"/>
<keyword id="KW-0150">Chloroplast</keyword>
<keyword id="KW-0472">Membrane</keyword>
<keyword id="KW-0934">Plastid</keyword>
<keyword id="KW-0793">Thylakoid</keyword>
<keyword id="KW-0812">Transmembrane</keyword>
<keyword id="KW-1133">Transmembrane helix</keyword>
<reference key="1">
    <citation type="journal article" date="2007" name="Mol. Phylogenet. Evol.">
        <title>Phylogenetic and evolutionary implications of complete chloroplast genome sequences of four early-diverging angiosperms: Buxus (Buxaceae), Chloranthus (Chloranthaceae), Dioscorea (Dioscoreaceae), and Illicium (Schisandraceae).</title>
        <authorList>
            <person name="Hansen D.R."/>
            <person name="Dastidar S.G."/>
            <person name="Cai Z."/>
            <person name="Penaflor C."/>
            <person name="Kuehl J.V."/>
            <person name="Boore J.L."/>
            <person name="Jansen R.K."/>
        </authorList>
    </citation>
    <scope>NUCLEOTIDE SEQUENCE [LARGE SCALE GENOMIC DNA]</scope>
</reference>
<evidence type="ECO:0000255" key="1">
    <source>
        <dbReference type="HAMAP-Rule" id="MF_00293"/>
    </source>
</evidence>
<comment type="function">
    <text evidence="1">May play a role in photosystem I and II biogenesis.</text>
</comment>
<comment type="subcellular location">
    <subcellularLocation>
        <location evidence="1">Plastid</location>
        <location evidence="1">Chloroplast thylakoid membrane</location>
        <topology evidence="1">Single-pass membrane protein</topology>
    </subcellularLocation>
</comment>
<comment type="similarity">
    <text evidence="1">Belongs to the PsbN family.</text>
</comment>
<comment type="caution">
    <text evidence="1">Originally thought to be a component of PSII; based on experiments in Synechocystis, N.tabacum and barley, and its absence from PSII in T.elongatus and T.vulcanus, this is probably not true.</text>
</comment>
<gene>
    <name evidence="1" type="primary">psbN</name>
</gene>
<organism>
    <name type="scientific">Chloranthus spicatus</name>
    <name type="common">Chulantree</name>
    <name type="synonym">Nigrina spicata</name>
    <dbReference type="NCBI Taxonomy" id="13006"/>
    <lineage>
        <taxon>Eukaryota</taxon>
        <taxon>Viridiplantae</taxon>
        <taxon>Streptophyta</taxon>
        <taxon>Embryophyta</taxon>
        <taxon>Tracheophyta</taxon>
        <taxon>Spermatophyta</taxon>
        <taxon>Magnoliopsida</taxon>
        <taxon>Chloranthales</taxon>
        <taxon>Chloranthaceae</taxon>
        <taxon>Chloranthus</taxon>
    </lineage>
</organism>
<dbReference type="EMBL" id="EF380352">
    <property type="protein sequence ID" value="ABQ43287.1"/>
    <property type="molecule type" value="Genomic_DNA"/>
</dbReference>
<dbReference type="RefSeq" id="YP_001294126.1">
    <property type="nucleotide sequence ID" value="NC_009598.1"/>
</dbReference>
<dbReference type="SMR" id="A6MMF0"/>
<dbReference type="GeneID" id="5236503"/>
<dbReference type="GO" id="GO:0009535">
    <property type="term" value="C:chloroplast thylakoid membrane"/>
    <property type="evidence" value="ECO:0007669"/>
    <property type="project" value="UniProtKB-SubCell"/>
</dbReference>
<dbReference type="GO" id="GO:0015979">
    <property type="term" value="P:photosynthesis"/>
    <property type="evidence" value="ECO:0007669"/>
    <property type="project" value="InterPro"/>
</dbReference>
<dbReference type="HAMAP" id="MF_00293">
    <property type="entry name" value="PSII_PsbN"/>
    <property type="match status" value="1"/>
</dbReference>
<dbReference type="InterPro" id="IPR003398">
    <property type="entry name" value="PSII_PsbN"/>
</dbReference>
<dbReference type="PANTHER" id="PTHR35326">
    <property type="entry name" value="PROTEIN PSBN"/>
    <property type="match status" value="1"/>
</dbReference>
<dbReference type="PANTHER" id="PTHR35326:SF3">
    <property type="entry name" value="PROTEIN PSBN"/>
    <property type="match status" value="1"/>
</dbReference>
<dbReference type="Pfam" id="PF02468">
    <property type="entry name" value="PsbN"/>
    <property type="match status" value="1"/>
</dbReference>
<name>PSBN_CHLSC</name>